<protein>
    <recommendedName>
        <fullName evidence="1">ATP synthase subunit b</fullName>
    </recommendedName>
    <alternativeName>
        <fullName evidence="1">ATP synthase F(0) sector subunit b</fullName>
    </alternativeName>
    <alternativeName>
        <fullName evidence="1">ATPase subunit I</fullName>
    </alternativeName>
    <alternativeName>
        <fullName evidence="1">F-type ATPase subunit b</fullName>
        <shortName evidence="1">F-ATPase subunit b</shortName>
    </alternativeName>
</protein>
<evidence type="ECO:0000255" key="1">
    <source>
        <dbReference type="HAMAP-Rule" id="MF_01398"/>
    </source>
</evidence>
<sequence>MNLPLLATEGFGLNLNLFETNVLNWAVVVFGLYKFLPSFLGKMLQKRREGILLELKDAEDRLLKATQALEKAKTDLSLAEEKASQIKADSLKRSESIRMESEKKAIEEMARIKQSAISDESSEASRAISQLRKEAVELAIKKALDSLPNRLDQTTQENLVTQSINNIEMN</sequence>
<dbReference type="EMBL" id="CP000552">
    <property type="protein sequence ID" value="ABM72839.1"/>
    <property type="molecule type" value="Genomic_DNA"/>
</dbReference>
<dbReference type="RefSeq" id="WP_011820934.1">
    <property type="nucleotide sequence ID" value="NC_008817.1"/>
</dbReference>
<dbReference type="SMR" id="A2BYH8"/>
<dbReference type="STRING" id="167542.P9515_16321"/>
<dbReference type="GeneID" id="60201124"/>
<dbReference type="KEGG" id="pmc:P9515_16321"/>
<dbReference type="eggNOG" id="COG0711">
    <property type="taxonomic scope" value="Bacteria"/>
</dbReference>
<dbReference type="HOGENOM" id="CLU_079215_8_1_3"/>
<dbReference type="OrthoDB" id="461217at2"/>
<dbReference type="Proteomes" id="UP000001589">
    <property type="component" value="Chromosome"/>
</dbReference>
<dbReference type="GO" id="GO:0031676">
    <property type="term" value="C:plasma membrane-derived thylakoid membrane"/>
    <property type="evidence" value="ECO:0007669"/>
    <property type="project" value="UniProtKB-SubCell"/>
</dbReference>
<dbReference type="GO" id="GO:0045259">
    <property type="term" value="C:proton-transporting ATP synthase complex"/>
    <property type="evidence" value="ECO:0007669"/>
    <property type="project" value="UniProtKB-KW"/>
</dbReference>
<dbReference type="GO" id="GO:0046933">
    <property type="term" value="F:proton-transporting ATP synthase activity, rotational mechanism"/>
    <property type="evidence" value="ECO:0007669"/>
    <property type="project" value="UniProtKB-UniRule"/>
</dbReference>
<dbReference type="CDD" id="cd06503">
    <property type="entry name" value="ATP-synt_Fo_b"/>
    <property type="match status" value="1"/>
</dbReference>
<dbReference type="HAMAP" id="MF_01398">
    <property type="entry name" value="ATP_synth_b_bprime"/>
    <property type="match status" value="1"/>
</dbReference>
<dbReference type="InterPro" id="IPR002146">
    <property type="entry name" value="ATP_synth_b/b'su_bac/chlpt"/>
</dbReference>
<dbReference type="NCBIfam" id="NF005606">
    <property type="entry name" value="PRK07352.1"/>
    <property type="match status" value="1"/>
</dbReference>
<dbReference type="PANTHER" id="PTHR34264">
    <property type="entry name" value="ATP SYNTHASE SUBUNIT B, CHLOROPLASTIC"/>
    <property type="match status" value="1"/>
</dbReference>
<dbReference type="PANTHER" id="PTHR34264:SF3">
    <property type="entry name" value="ATP SYNTHASE SUBUNIT B, CHLOROPLASTIC"/>
    <property type="match status" value="1"/>
</dbReference>
<dbReference type="Pfam" id="PF00430">
    <property type="entry name" value="ATP-synt_B"/>
    <property type="match status" value="1"/>
</dbReference>
<name>ATPF_PROM5</name>
<organism>
    <name type="scientific">Prochlorococcus marinus (strain MIT 9515)</name>
    <dbReference type="NCBI Taxonomy" id="167542"/>
    <lineage>
        <taxon>Bacteria</taxon>
        <taxon>Bacillati</taxon>
        <taxon>Cyanobacteriota</taxon>
        <taxon>Cyanophyceae</taxon>
        <taxon>Synechococcales</taxon>
        <taxon>Prochlorococcaceae</taxon>
        <taxon>Prochlorococcus</taxon>
    </lineage>
</organism>
<comment type="function">
    <text evidence="1">F(1)F(0) ATP synthase produces ATP from ADP in the presence of a proton or sodium gradient. F-type ATPases consist of two structural domains, F(1) containing the extramembraneous catalytic core and F(0) containing the membrane proton channel, linked together by a central stalk and a peripheral stalk. During catalysis, ATP synthesis in the catalytic domain of F(1) is coupled via a rotary mechanism of the central stalk subunits to proton translocation.</text>
</comment>
<comment type="function">
    <text evidence="1">Component of the F(0) channel, it forms part of the peripheral stalk, linking F(1) to F(0).</text>
</comment>
<comment type="subunit">
    <text evidence="1">F-type ATPases have 2 components, F(1) - the catalytic core - and F(0) - the membrane proton channel. F(1) has five subunits: alpha(3), beta(3), gamma(1), delta(1), epsilon(1). F(0) has four main subunits: a(1), b(1), b'(1) and c(10-14). The alpha and beta chains form an alternating ring which encloses part of the gamma chain. F(1) is attached to F(0) by a central stalk formed by the gamma and epsilon chains, while a peripheral stalk is formed by the delta, b and b' chains.</text>
</comment>
<comment type="subcellular location">
    <subcellularLocation>
        <location evidence="1">Cellular thylakoid membrane</location>
        <topology evidence="1">Single-pass membrane protein</topology>
    </subcellularLocation>
</comment>
<comment type="similarity">
    <text evidence="1">Belongs to the ATPase B chain family.</text>
</comment>
<reference key="1">
    <citation type="journal article" date="2007" name="PLoS Genet.">
        <title>Patterns and implications of gene gain and loss in the evolution of Prochlorococcus.</title>
        <authorList>
            <person name="Kettler G.C."/>
            <person name="Martiny A.C."/>
            <person name="Huang K."/>
            <person name="Zucker J."/>
            <person name="Coleman M.L."/>
            <person name="Rodrigue S."/>
            <person name="Chen F."/>
            <person name="Lapidus A."/>
            <person name="Ferriera S."/>
            <person name="Johnson J."/>
            <person name="Steglich C."/>
            <person name="Church G.M."/>
            <person name="Richardson P."/>
            <person name="Chisholm S.W."/>
        </authorList>
    </citation>
    <scope>NUCLEOTIDE SEQUENCE [LARGE SCALE GENOMIC DNA]</scope>
    <source>
        <strain>MIT 9515</strain>
    </source>
</reference>
<proteinExistence type="inferred from homology"/>
<feature type="chain" id="PRO_0000368670" description="ATP synthase subunit b">
    <location>
        <begin position="1"/>
        <end position="170"/>
    </location>
</feature>
<feature type="transmembrane region" description="Helical" evidence="1">
    <location>
        <begin position="15"/>
        <end position="37"/>
    </location>
</feature>
<accession>A2BYH8</accession>
<keyword id="KW-0066">ATP synthesis</keyword>
<keyword id="KW-0138">CF(0)</keyword>
<keyword id="KW-0375">Hydrogen ion transport</keyword>
<keyword id="KW-0406">Ion transport</keyword>
<keyword id="KW-0472">Membrane</keyword>
<keyword id="KW-0793">Thylakoid</keyword>
<keyword id="KW-0812">Transmembrane</keyword>
<keyword id="KW-1133">Transmembrane helix</keyword>
<keyword id="KW-0813">Transport</keyword>
<gene>
    <name evidence="1" type="primary">atpF</name>
    <name type="ordered locus">P9515_16321</name>
</gene>